<keyword id="KW-0963">Cytoplasm</keyword>
<keyword id="KW-0255">Endonuclease</keyword>
<keyword id="KW-0378">Hydrolase</keyword>
<keyword id="KW-0460">Magnesium</keyword>
<keyword id="KW-0479">Metal-binding</keyword>
<keyword id="KW-0540">Nuclease</keyword>
<keyword id="KW-1185">Reference proteome</keyword>
<reference key="1">
    <citation type="submission" date="2007-05" db="EMBL/GenBank/DDBJ databases">
        <title>Complete sequence of chromosome of Acidiphilium cryptum JF-5.</title>
        <authorList>
            <consortium name="US DOE Joint Genome Institute"/>
            <person name="Copeland A."/>
            <person name="Lucas S."/>
            <person name="Lapidus A."/>
            <person name="Barry K."/>
            <person name="Detter J.C."/>
            <person name="Glavina del Rio T."/>
            <person name="Hammon N."/>
            <person name="Israni S."/>
            <person name="Dalin E."/>
            <person name="Tice H."/>
            <person name="Pitluck S."/>
            <person name="Sims D."/>
            <person name="Brettin T."/>
            <person name="Bruce D."/>
            <person name="Han C."/>
            <person name="Schmutz J."/>
            <person name="Larimer F."/>
            <person name="Land M."/>
            <person name="Hauser L."/>
            <person name="Kyrpides N."/>
            <person name="Kim E."/>
            <person name="Magnuson T."/>
            <person name="Richardson P."/>
        </authorList>
    </citation>
    <scope>NUCLEOTIDE SEQUENCE [LARGE SCALE GENOMIC DNA]</scope>
    <source>
        <strain>JF-5</strain>
    </source>
</reference>
<feature type="chain" id="PRO_0000332551" description="Ribonuclease H">
    <location>
        <begin position="1"/>
        <end position="160"/>
    </location>
</feature>
<feature type="domain" description="RNase H type-1" evidence="2">
    <location>
        <begin position="5"/>
        <end position="146"/>
    </location>
</feature>
<feature type="binding site" evidence="1">
    <location>
        <position position="14"/>
    </location>
    <ligand>
        <name>Mg(2+)</name>
        <dbReference type="ChEBI" id="CHEBI:18420"/>
        <label>1</label>
    </ligand>
</feature>
<feature type="binding site" evidence="1">
    <location>
        <position position="14"/>
    </location>
    <ligand>
        <name>Mg(2+)</name>
        <dbReference type="ChEBI" id="CHEBI:18420"/>
        <label>2</label>
    </ligand>
</feature>
<feature type="binding site" evidence="1">
    <location>
        <position position="52"/>
    </location>
    <ligand>
        <name>Mg(2+)</name>
        <dbReference type="ChEBI" id="CHEBI:18420"/>
        <label>1</label>
    </ligand>
</feature>
<feature type="binding site" evidence="1">
    <location>
        <position position="74"/>
    </location>
    <ligand>
        <name>Mg(2+)</name>
        <dbReference type="ChEBI" id="CHEBI:18420"/>
        <label>1</label>
    </ligand>
</feature>
<feature type="binding site" evidence="1">
    <location>
        <position position="138"/>
    </location>
    <ligand>
        <name>Mg(2+)</name>
        <dbReference type="ChEBI" id="CHEBI:18420"/>
        <label>2</label>
    </ligand>
</feature>
<sequence length="160" mass="17857">MASEPGGLVEIWTDGGCKPNPGAGGWAAVLRFGAAEREMSGAERETTNNRMELTAAAAALEALKRPCRVKLHTDSEYLRNGITRWHTGWVRRNWRNAQGDPVANYELWQRVLAAAKPHEIEWIWVRGHAGDPMNERVDQLATAAREAMLREPAETSTARR</sequence>
<protein>
    <recommendedName>
        <fullName evidence="1">Ribonuclease H</fullName>
        <shortName evidence="1">RNase H</shortName>
        <ecNumber evidence="1">3.1.26.4</ecNumber>
    </recommendedName>
</protein>
<accession>A5FZ26</accession>
<organism>
    <name type="scientific">Acidiphilium cryptum (strain JF-5)</name>
    <dbReference type="NCBI Taxonomy" id="349163"/>
    <lineage>
        <taxon>Bacteria</taxon>
        <taxon>Pseudomonadati</taxon>
        <taxon>Pseudomonadota</taxon>
        <taxon>Alphaproteobacteria</taxon>
        <taxon>Acetobacterales</taxon>
        <taxon>Acidocellaceae</taxon>
        <taxon>Acidiphilium</taxon>
    </lineage>
</organism>
<evidence type="ECO:0000255" key="1">
    <source>
        <dbReference type="HAMAP-Rule" id="MF_00042"/>
    </source>
</evidence>
<evidence type="ECO:0000255" key="2">
    <source>
        <dbReference type="PROSITE-ProRule" id="PRU00408"/>
    </source>
</evidence>
<dbReference type="EC" id="3.1.26.4" evidence="1"/>
<dbReference type="EMBL" id="CP000697">
    <property type="protein sequence ID" value="ABQ30858.1"/>
    <property type="molecule type" value="Genomic_DNA"/>
</dbReference>
<dbReference type="RefSeq" id="WP_007421928.1">
    <property type="nucleotide sequence ID" value="NC_009484.1"/>
</dbReference>
<dbReference type="SMR" id="A5FZ26"/>
<dbReference type="STRING" id="349163.Acry_1653"/>
<dbReference type="KEGG" id="acr:Acry_1653"/>
<dbReference type="eggNOG" id="COG0328">
    <property type="taxonomic scope" value="Bacteria"/>
</dbReference>
<dbReference type="HOGENOM" id="CLU_030894_6_0_5"/>
<dbReference type="Proteomes" id="UP000000245">
    <property type="component" value="Chromosome"/>
</dbReference>
<dbReference type="GO" id="GO:0005737">
    <property type="term" value="C:cytoplasm"/>
    <property type="evidence" value="ECO:0007669"/>
    <property type="project" value="UniProtKB-SubCell"/>
</dbReference>
<dbReference type="GO" id="GO:0000287">
    <property type="term" value="F:magnesium ion binding"/>
    <property type="evidence" value="ECO:0007669"/>
    <property type="project" value="UniProtKB-UniRule"/>
</dbReference>
<dbReference type="GO" id="GO:0003676">
    <property type="term" value="F:nucleic acid binding"/>
    <property type="evidence" value="ECO:0007669"/>
    <property type="project" value="InterPro"/>
</dbReference>
<dbReference type="GO" id="GO:0004523">
    <property type="term" value="F:RNA-DNA hybrid ribonuclease activity"/>
    <property type="evidence" value="ECO:0007669"/>
    <property type="project" value="UniProtKB-UniRule"/>
</dbReference>
<dbReference type="GO" id="GO:0043137">
    <property type="term" value="P:DNA replication, removal of RNA primer"/>
    <property type="evidence" value="ECO:0007669"/>
    <property type="project" value="TreeGrafter"/>
</dbReference>
<dbReference type="CDD" id="cd09278">
    <property type="entry name" value="RNase_HI_prokaryote_like"/>
    <property type="match status" value="1"/>
</dbReference>
<dbReference type="FunFam" id="3.30.420.10:FF:000089">
    <property type="entry name" value="Ribonuclease H"/>
    <property type="match status" value="1"/>
</dbReference>
<dbReference type="Gene3D" id="3.30.420.10">
    <property type="entry name" value="Ribonuclease H-like superfamily/Ribonuclease H"/>
    <property type="match status" value="1"/>
</dbReference>
<dbReference type="HAMAP" id="MF_00042">
    <property type="entry name" value="RNase_H"/>
    <property type="match status" value="1"/>
</dbReference>
<dbReference type="InterPro" id="IPR050092">
    <property type="entry name" value="RNase_H"/>
</dbReference>
<dbReference type="InterPro" id="IPR012337">
    <property type="entry name" value="RNaseH-like_sf"/>
</dbReference>
<dbReference type="InterPro" id="IPR002156">
    <property type="entry name" value="RNaseH_domain"/>
</dbReference>
<dbReference type="InterPro" id="IPR036397">
    <property type="entry name" value="RNaseH_sf"/>
</dbReference>
<dbReference type="InterPro" id="IPR022892">
    <property type="entry name" value="RNaseHI"/>
</dbReference>
<dbReference type="NCBIfam" id="NF001236">
    <property type="entry name" value="PRK00203.1"/>
    <property type="match status" value="1"/>
</dbReference>
<dbReference type="PANTHER" id="PTHR10642">
    <property type="entry name" value="RIBONUCLEASE H1"/>
    <property type="match status" value="1"/>
</dbReference>
<dbReference type="PANTHER" id="PTHR10642:SF26">
    <property type="entry name" value="RIBONUCLEASE H1"/>
    <property type="match status" value="1"/>
</dbReference>
<dbReference type="Pfam" id="PF00075">
    <property type="entry name" value="RNase_H"/>
    <property type="match status" value="1"/>
</dbReference>
<dbReference type="SUPFAM" id="SSF53098">
    <property type="entry name" value="Ribonuclease H-like"/>
    <property type="match status" value="1"/>
</dbReference>
<dbReference type="PROSITE" id="PS50879">
    <property type="entry name" value="RNASE_H_1"/>
    <property type="match status" value="1"/>
</dbReference>
<comment type="function">
    <text evidence="1">Endonuclease that specifically degrades the RNA of RNA-DNA hybrids.</text>
</comment>
<comment type="catalytic activity">
    <reaction evidence="1">
        <text>Endonucleolytic cleavage to 5'-phosphomonoester.</text>
        <dbReference type="EC" id="3.1.26.4"/>
    </reaction>
</comment>
<comment type="cofactor">
    <cofactor evidence="1">
        <name>Mg(2+)</name>
        <dbReference type="ChEBI" id="CHEBI:18420"/>
    </cofactor>
    <text evidence="1">Binds 1 Mg(2+) ion per subunit. May bind a second metal ion at a regulatory site, or after substrate binding.</text>
</comment>
<comment type="subunit">
    <text evidence="1">Monomer.</text>
</comment>
<comment type="subcellular location">
    <subcellularLocation>
        <location evidence="1">Cytoplasm</location>
    </subcellularLocation>
</comment>
<comment type="similarity">
    <text evidence="1">Belongs to the RNase H family.</text>
</comment>
<gene>
    <name evidence="1" type="primary">rnhA</name>
    <name type="ordered locus">Acry_1653</name>
</gene>
<name>RNH_ACICJ</name>
<proteinExistence type="inferred from homology"/>